<evidence type="ECO:0000255" key="1"/>
<evidence type="ECO:0000256" key="2">
    <source>
        <dbReference type="SAM" id="MobiDB-lite"/>
    </source>
</evidence>
<evidence type="ECO:0000269" key="3">
    <source>
    </source>
</evidence>
<evidence type="ECO:0000269" key="4">
    <source>
    </source>
</evidence>
<evidence type="ECO:0000305" key="5"/>
<reference key="1">
    <citation type="journal article" date="2000" name="Genetics">
        <title>Glucose monitoring in fission yeast via the gpa2 Galpha, the git5 Gbeta and the git3 putative glucose receptor.</title>
        <authorList>
            <person name="Welton R.M."/>
            <person name="Hoffman C.S."/>
        </authorList>
    </citation>
    <scope>NUCLEOTIDE SEQUENCE [GENOMIC DNA]</scope>
    <scope>FUNCTION</scope>
</reference>
<reference key="2">
    <citation type="journal article" date="2002" name="Nature">
        <title>The genome sequence of Schizosaccharomyces pombe.</title>
        <authorList>
            <person name="Wood V."/>
            <person name="Gwilliam R."/>
            <person name="Rajandream M.A."/>
            <person name="Lyne M.H."/>
            <person name="Lyne R."/>
            <person name="Stewart A."/>
            <person name="Sgouros J.G."/>
            <person name="Peat N."/>
            <person name="Hayles J."/>
            <person name="Baker S.G."/>
            <person name="Basham D."/>
            <person name="Bowman S."/>
            <person name="Brooks K."/>
            <person name="Brown D."/>
            <person name="Brown S."/>
            <person name="Chillingworth T."/>
            <person name="Churcher C.M."/>
            <person name="Collins M."/>
            <person name="Connor R."/>
            <person name="Cronin A."/>
            <person name="Davis P."/>
            <person name="Feltwell T."/>
            <person name="Fraser A."/>
            <person name="Gentles S."/>
            <person name="Goble A."/>
            <person name="Hamlin N."/>
            <person name="Harris D.E."/>
            <person name="Hidalgo J."/>
            <person name="Hodgson G."/>
            <person name="Holroyd S."/>
            <person name="Hornsby T."/>
            <person name="Howarth S."/>
            <person name="Huckle E.J."/>
            <person name="Hunt S."/>
            <person name="Jagels K."/>
            <person name="James K.D."/>
            <person name="Jones L."/>
            <person name="Jones M."/>
            <person name="Leather S."/>
            <person name="McDonald S."/>
            <person name="McLean J."/>
            <person name="Mooney P."/>
            <person name="Moule S."/>
            <person name="Mungall K.L."/>
            <person name="Murphy L.D."/>
            <person name="Niblett D."/>
            <person name="Odell C."/>
            <person name="Oliver K."/>
            <person name="O'Neil S."/>
            <person name="Pearson D."/>
            <person name="Quail M.A."/>
            <person name="Rabbinowitsch E."/>
            <person name="Rutherford K.M."/>
            <person name="Rutter S."/>
            <person name="Saunders D."/>
            <person name="Seeger K."/>
            <person name="Sharp S."/>
            <person name="Skelton J."/>
            <person name="Simmonds M.N."/>
            <person name="Squares R."/>
            <person name="Squares S."/>
            <person name="Stevens K."/>
            <person name="Taylor K."/>
            <person name="Taylor R.G."/>
            <person name="Tivey A."/>
            <person name="Walsh S.V."/>
            <person name="Warren T."/>
            <person name="Whitehead S."/>
            <person name="Woodward J.R."/>
            <person name="Volckaert G."/>
            <person name="Aert R."/>
            <person name="Robben J."/>
            <person name="Grymonprez B."/>
            <person name="Weltjens I."/>
            <person name="Vanstreels E."/>
            <person name="Rieger M."/>
            <person name="Schaefer M."/>
            <person name="Mueller-Auer S."/>
            <person name="Gabel C."/>
            <person name="Fuchs M."/>
            <person name="Duesterhoeft A."/>
            <person name="Fritzc C."/>
            <person name="Holzer E."/>
            <person name="Moestl D."/>
            <person name="Hilbert H."/>
            <person name="Borzym K."/>
            <person name="Langer I."/>
            <person name="Beck A."/>
            <person name="Lehrach H."/>
            <person name="Reinhardt R."/>
            <person name="Pohl T.M."/>
            <person name="Eger P."/>
            <person name="Zimmermann W."/>
            <person name="Wedler H."/>
            <person name="Wambutt R."/>
            <person name="Purnelle B."/>
            <person name="Goffeau A."/>
            <person name="Cadieu E."/>
            <person name="Dreano S."/>
            <person name="Gloux S."/>
            <person name="Lelaure V."/>
            <person name="Mottier S."/>
            <person name="Galibert F."/>
            <person name="Aves S.J."/>
            <person name="Xiang Z."/>
            <person name="Hunt C."/>
            <person name="Moore K."/>
            <person name="Hurst S.M."/>
            <person name="Lucas M."/>
            <person name="Rochet M."/>
            <person name="Gaillardin C."/>
            <person name="Tallada V.A."/>
            <person name="Garzon A."/>
            <person name="Thode G."/>
            <person name="Daga R.R."/>
            <person name="Cruzado L."/>
            <person name="Jimenez J."/>
            <person name="Sanchez M."/>
            <person name="del Rey F."/>
            <person name="Benito J."/>
            <person name="Dominguez A."/>
            <person name="Revuelta J.L."/>
            <person name="Moreno S."/>
            <person name="Armstrong J."/>
            <person name="Forsburg S.L."/>
            <person name="Cerutti L."/>
            <person name="Lowe T."/>
            <person name="McCombie W.R."/>
            <person name="Paulsen I."/>
            <person name="Potashkin J."/>
            <person name="Shpakovski G.V."/>
            <person name="Ussery D."/>
            <person name="Barrell B.G."/>
            <person name="Nurse P."/>
        </authorList>
    </citation>
    <scope>NUCLEOTIDE SEQUENCE [LARGE SCALE GENOMIC DNA]</scope>
    <source>
        <strain>972 / ATCC 24843</strain>
    </source>
</reference>
<reference key="3">
    <citation type="journal article" date="2010" name="Eukaryot. Cell">
        <title>Activated alleles of the Schizosaccharomyces pombe gpa2+ Galpha gene identify residues involved in GDP-GTP exchange.</title>
        <authorList>
            <person name="Ivey F.D."/>
            <person name="Taglia F.X."/>
            <person name="Yang F."/>
            <person name="Lander M.M."/>
            <person name="Kelly D.A."/>
            <person name="Hoffman C.S."/>
        </authorList>
    </citation>
    <scope>FUNCTION</scope>
    <scope>INTERACTION WITH GPA2</scope>
</reference>
<feature type="chain" id="PRO_0000195085" description="Glucose receptor protein git3">
    <location>
        <begin position="1"/>
        <end position="466"/>
    </location>
</feature>
<feature type="transmembrane region" description="Helical; Name=1" evidence="1">
    <location>
        <begin position="30"/>
        <end position="50"/>
    </location>
</feature>
<feature type="transmembrane region" description="Helical; Name=2" evidence="1">
    <location>
        <begin position="65"/>
        <end position="85"/>
    </location>
</feature>
<feature type="transmembrane region" description="Helical; Name=3" evidence="1">
    <location>
        <begin position="101"/>
        <end position="121"/>
    </location>
</feature>
<feature type="transmembrane region" description="Helical; Name=4" evidence="1">
    <location>
        <begin position="144"/>
        <end position="164"/>
    </location>
</feature>
<feature type="transmembrane region" description="Helical; Name=5" evidence="1">
    <location>
        <begin position="192"/>
        <end position="212"/>
    </location>
</feature>
<feature type="transmembrane region" description="Helical; Name=6" evidence="1">
    <location>
        <begin position="372"/>
        <end position="392"/>
    </location>
</feature>
<feature type="transmembrane region" description="Helical; Name=7" evidence="1">
    <location>
        <begin position="409"/>
        <end position="429"/>
    </location>
</feature>
<feature type="region of interest" description="Disordered" evidence="2">
    <location>
        <begin position="262"/>
        <end position="337"/>
    </location>
</feature>
<feature type="compositionally biased region" description="Low complexity" evidence="2">
    <location>
        <begin position="262"/>
        <end position="285"/>
    </location>
</feature>
<feature type="compositionally biased region" description="Polar residues" evidence="2">
    <location>
        <begin position="292"/>
        <end position="305"/>
    </location>
</feature>
<feature type="compositionally biased region" description="Basic and acidic residues" evidence="2">
    <location>
        <begin position="308"/>
        <end position="327"/>
    </location>
</feature>
<dbReference type="EMBL" id="CU329672">
    <property type="protein sequence ID" value="CAA22776.1"/>
    <property type="molecule type" value="Genomic_DNA"/>
</dbReference>
<dbReference type="EMBL" id="AF085162">
    <property type="protein sequence ID" value="AAC69337.1"/>
    <property type="molecule type" value="Genomic_DNA"/>
</dbReference>
<dbReference type="PIR" id="T41125">
    <property type="entry name" value="T41125"/>
</dbReference>
<dbReference type="RefSeq" id="NP_588228.1">
    <property type="nucleotide sequence ID" value="NM_001023218.2"/>
</dbReference>
<dbReference type="SMR" id="O94744"/>
<dbReference type="BioGRID" id="275353">
    <property type="interactions" value="83"/>
</dbReference>
<dbReference type="FunCoup" id="O94744">
    <property type="interactions" value="131"/>
</dbReference>
<dbReference type="STRING" id="284812.O94744"/>
<dbReference type="iPTMnet" id="O94744"/>
<dbReference type="PaxDb" id="4896-SPCC1753.02c.1"/>
<dbReference type="EnsemblFungi" id="SPCC1753.02c.1">
    <property type="protein sequence ID" value="SPCC1753.02c.1:pep"/>
    <property type="gene ID" value="SPCC1753.02c"/>
</dbReference>
<dbReference type="GeneID" id="2538770"/>
<dbReference type="KEGG" id="spo:2538770"/>
<dbReference type="PomBase" id="SPCC1753.02c">
    <property type="gene designation" value="git3"/>
</dbReference>
<dbReference type="VEuPathDB" id="FungiDB:SPCC1753.02c"/>
<dbReference type="eggNOG" id="ENOG502QU8E">
    <property type="taxonomic scope" value="Eukaryota"/>
</dbReference>
<dbReference type="HOGENOM" id="CLU_586832_0_0_1"/>
<dbReference type="InParanoid" id="O94744"/>
<dbReference type="OMA" id="FWFFRMR"/>
<dbReference type="PhylomeDB" id="O94744"/>
<dbReference type="PRO" id="PR:O94744"/>
<dbReference type="Proteomes" id="UP000002485">
    <property type="component" value="Chromosome III"/>
</dbReference>
<dbReference type="GO" id="GO:0005886">
    <property type="term" value="C:plasma membrane"/>
    <property type="evidence" value="ECO:0000318"/>
    <property type="project" value="GO_Central"/>
</dbReference>
<dbReference type="GO" id="GO:1990576">
    <property type="term" value="F:G protein-coupled glucose receptor activity"/>
    <property type="evidence" value="ECO:0000316"/>
    <property type="project" value="PomBase"/>
</dbReference>
<dbReference type="GO" id="GO:0004930">
    <property type="term" value="F:G protein-coupled receptor activity"/>
    <property type="evidence" value="ECO:0000318"/>
    <property type="project" value="GO_Central"/>
</dbReference>
<dbReference type="GO" id="GO:0005085">
    <property type="term" value="F:guanyl-nucleotide exchange factor activity"/>
    <property type="evidence" value="ECO:0000316"/>
    <property type="project" value="PomBase"/>
</dbReference>
<dbReference type="GO" id="GO:0007189">
    <property type="term" value="P:adenylate cyclase-activating G protein-coupled receptor signaling pathway"/>
    <property type="evidence" value="ECO:0000318"/>
    <property type="project" value="GO_Central"/>
</dbReference>
<dbReference type="GO" id="GO:0010619">
    <property type="term" value="P:adenylate cyclase-activating glucose-activated G protein-coupled receptor signaling pathway"/>
    <property type="evidence" value="ECO:0000315"/>
    <property type="project" value="PomBase"/>
</dbReference>
<dbReference type="GO" id="GO:0010515">
    <property type="term" value="P:negative regulation of induction of conjugation with cellular fusion"/>
    <property type="evidence" value="ECO:0000315"/>
    <property type="project" value="PomBase"/>
</dbReference>
<dbReference type="InterPro" id="IPR023041">
    <property type="entry name" value="Glucose_rcpt_Git3_N"/>
</dbReference>
<dbReference type="PANTHER" id="PTHR23112">
    <property type="entry name" value="G PROTEIN-COUPLED RECEPTOR 157-RELATED"/>
    <property type="match status" value="1"/>
</dbReference>
<dbReference type="PANTHER" id="PTHR23112:SF37">
    <property type="entry name" value="G PROTEIN-COUPLED RECEPTOR GPR1"/>
    <property type="match status" value="1"/>
</dbReference>
<dbReference type="Pfam" id="PF11710">
    <property type="entry name" value="Git3"/>
    <property type="match status" value="1"/>
</dbReference>
<accession>O94744</accession>
<protein>
    <recommendedName>
        <fullName>Glucose receptor protein git3</fullName>
    </recommendedName>
    <alternativeName>
        <fullName>Glucose-insensitive transcription protein 3</fullName>
    </alternativeName>
</protein>
<sequence>MLHLDYTFNVSDATSTSSIIIVSRRELANLRIMVIIASAISIVFSLIAIFWRWSRRRTIREQFHIALFSVLFIRSIVQMIHPCLALSDPFFWAPKHRCFTIGFFLLVLVRMTDYWIFINILHNALLVLFPHVDTERRGLYRFRHTVFTLSFVIPLTIGGLAFTNKRNTFVNLQTRCYLPYTPVRFMFGLNWSFDYALSIAIIALQTCMFISIRRKIKRFKKYSHQQTNVFDTLNVIDSYPTAPDQVALPPFPDTNSTLTYTPSNSQSIYSSQSQPSPYSRPLLSSVHPNLPPGSQSTPANLNQSGIHFEQDFRDSPNRTNGLEDHTSFKLSSPLTSDEDGASSVLAAYGNDMQDDPLLKQRKRILSQSKFLFAYPAIFIFMWILPQIQIIVILAQPLHCSGSCKRFAFVAVFADNFVAIFIALSDFIWICYRGYTYLKERDSSKSYWDQIKELTLKWWRGKFGEEK</sequence>
<keyword id="KW-0297">G-protein coupled receptor</keyword>
<keyword id="KW-0472">Membrane</keyword>
<keyword id="KW-0675">Receptor</keyword>
<keyword id="KW-1185">Reference proteome</keyword>
<keyword id="KW-0807">Transducer</keyword>
<keyword id="KW-0812">Transmembrane</keyword>
<keyword id="KW-1133">Transmembrane helix</keyword>
<proteinExistence type="evidence at protein level"/>
<gene>
    <name type="primary">git3</name>
    <name type="ORF">SPCC1753.02c</name>
</gene>
<organism>
    <name type="scientific">Schizosaccharomyces pombe (strain 972 / ATCC 24843)</name>
    <name type="common">Fission yeast</name>
    <dbReference type="NCBI Taxonomy" id="284812"/>
    <lineage>
        <taxon>Eukaryota</taxon>
        <taxon>Fungi</taxon>
        <taxon>Dikarya</taxon>
        <taxon>Ascomycota</taxon>
        <taxon>Taphrinomycotina</taxon>
        <taxon>Schizosaccharomycetes</taxon>
        <taxon>Schizosaccharomycetales</taxon>
        <taxon>Schizosaccharomycetaceae</taxon>
        <taxon>Schizosaccharomyces</taxon>
    </lineage>
</organism>
<comment type="function">
    <text evidence="3 4">G protein-coupled receptor (GPCR) that senses glucose and signals via the heterotrimeric G protein alpha subunit gpa2 to activate adenylate cyclase and PKA signaling, and suppress sexual development and gluconeogenesis.</text>
</comment>
<comment type="subunit">
    <text evidence="4">Interacts with G protein alpha subunit gpa2; the interaction is direct and leads to activation of gpa2 upon glucose stimulation.</text>
</comment>
<comment type="subcellular location">
    <subcellularLocation>
        <location evidence="5">Membrane</location>
        <topology evidence="5">Multi-pass membrane protein</topology>
    </subcellularLocation>
</comment>
<comment type="similarity">
    <text evidence="5">Belongs to the G-protein coupled receptor GPR1/git3 family.</text>
</comment>
<name>GIT3_SCHPO</name>